<evidence type="ECO:0000250" key="1">
    <source>
        <dbReference type="UniProtKB" id="P56761"/>
    </source>
</evidence>
<evidence type="ECO:0000255" key="2">
    <source>
        <dbReference type="HAMAP-Rule" id="MF_01383"/>
    </source>
</evidence>
<proteinExistence type="inferred from homology"/>
<gene>
    <name evidence="2" type="primary">psbD</name>
</gene>
<sequence length="353" mass="39549">MTIALGKFTKDENDLFDIMDDWLRRDRFVFVGWSGLLLFPCAYFALGGWFTGTTFVTSWYTHGLASSYLEGCNFLTAAVSTPANSLAHSLLLLWGPEAQGDFTRWCQLGGLWTFVALHGAFGLIGFMLRQFELARSVQLRPYNAIAFSGPIAVFVSVFLIYPLGQSGWFFAPSFGVAAIFRFILFFQGFHNWTLNPFHMMGVAGVLGAALLCAIHGATVENTLFEDGDGANTFRAFNPTQAEETYSMVTANRFWSQIFGVAFSNKRWLHFFMLFVPVTGLWMSALGVVGLALNLRAYDFVSQEIRAAEDPEFETFYTKNILLNEGIRAWMAAQDQPHENLIFPEEVLPRGNAL</sequence>
<reference key="1">
    <citation type="journal article" date="2006" name="BMC Genomics">
        <title>The complete chloroplast genome sequence of Gossypium hirsutum: organization and phylogenetic relationships to other angiosperms.</title>
        <authorList>
            <person name="Lee S.-B."/>
            <person name="Kaittanis C."/>
            <person name="Jansen R.K."/>
            <person name="Hostetler J.B."/>
            <person name="Tallon L.J."/>
            <person name="Town C.D."/>
            <person name="Daniell H."/>
        </authorList>
    </citation>
    <scope>NUCLEOTIDE SEQUENCE [LARGE SCALE GENOMIC DNA]</scope>
    <source>
        <strain>cv. Coker 310FR</strain>
    </source>
</reference>
<geneLocation type="chloroplast"/>
<feature type="initiator methionine" description="Removed" evidence="1">
    <location>
        <position position="1"/>
    </location>
</feature>
<feature type="chain" id="PRO_0000359654" description="Photosystem II D2 protein">
    <location>
        <begin position="2"/>
        <end position="353"/>
    </location>
</feature>
<feature type="transmembrane region" description="Helical" evidence="2">
    <location>
        <begin position="41"/>
        <end position="61"/>
    </location>
</feature>
<feature type="transmembrane region" description="Helical" evidence="2">
    <location>
        <begin position="125"/>
        <end position="141"/>
    </location>
</feature>
<feature type="transmembrane region" description="Helical" evidence="2">
    <location>
        <begin position="153"/>
        <end position="166"/>
    </location>
</feature>
<feature type="transmembrane region" description="Helical" evidence="2">
    <location>
        <begin position="208"/>
        <end position="228"/>
    </location>
</feature>
<feature type="transmembrane region" description="Helical" evidence="2">
    <location>
        <begin position="279"/>
        <end position="295"/>
    </location>
</feature>
<feature type="binding site" description="axial binding residue" evidence="2">
    <location>
        <position position="118"/>
    </location>
    <ligand>
        <name>chlorophyll a</name>
        <dbReference type="ChEBI" id="CHEBI:58416"/>
        <label>ChlzD2</label>
    </ligand>
    <ligandPart>
        <name>Mg</name>
        <dbReference type="ChEBI" id="CHEBI:25107"/>
    </ligandPart>
</feature>
<feature type="binding site" evidence="2">
    <location>
        <position position="130"/>
    </location>
    <ligand>
        <name>pheophytin a</name>
        <dbReference type="ChEBI" id="CHEBI:136840"/>
        <label>D2</label>
    </ligand>
</feature>
<feature type="binding site" evidence="2">
    <location>
        <position position="143"/>
    </location>
    <ligand>
        <name>pheophytin a</name>
        <dbReference type="ChEBI" id="CHEBI:136840"/>
        <label>D2</label>
    </ligand>
</feature>
<feature type="binding site" description="axial binding residue" evidence="2">
    <location>
        <position position="198"/>
    </location>
    <ligand>
        <name>chlorophyll a</name>
        <dbReference type="ChEBI" id="CHEBI:58416"/>
        <label>PD2</label>
    </ligand>
    <ligandPart>
        <name>Mg</name>
        <dbReference type="ChEBI" id="CHEBI:25107"/>
    </ligandPart>
</feature>
<feature type="binding site" evidence="2">
    <location>
        <position position="215"/>
    </location>
    <ligand>
        <name>a plastoquinone</name>
        <dbReference type="ChEBI" id="CHEBI:17757"/>
        <label>Q(A)</label>
    </ligand>
</feature>
<feature type="binding site" evidence="2">
    <location>
        <position position="215"/>
    </location>
    <ligand>
        <name>Fe cation</name>
        <dbReference type="ChEBI" id="CHEBI:24875"/>
        <note>ligand shared with heterodimeric partner</note>
    </ligand>
</feature>
<feature type="binding site" evidence="2">
    <location>
        <position position="262"/>
    </location>
    <ligand>
        <name>a plastoquinone</name>
        <dbReference type="ChEBI" id="CHEBI:17757"/>
        <label>Q(A)</label>
    </ligand>
</feature>
<feature type="binding site" evidence="2">
    <location>
        <position position="269"/>
    </location>
    <ligand>
        <name>Fe cation</name>
        <dbReference type="ChEBI" id="CHEBI:24875"/>
        <note>ligand shared with heterodimeric partner</note>
    </ligand>
</feature>
<feature type="modified residue" description="N-acetylthreonine" evidence="1">
    <location>
        <position position="2"/>
    </location>
</feature>
<feature type="modified residue" description="Phosphothreonine" evidence="1">
    <location>
        <position position="2"/>
    </location>
</feature>
<name>PSBD_GOSHI</name>
<organism>
    <name type="scientific">Gossypium hirsutum</name>
    <name type="common">Upland cotton</name>
    <name type="synonym">Gossypium mexicanum</name>
    <dbReference type="NCBI Taxonomy" id="3635"/>
    <lineage>
        <taxon>Eukaryota</taxon>
        <taxon>Viridiplantae</taxon>
        <taxon>Streptophyta</taxon>
        <taxon>Embryophyta</taxon>
        <taxon>Tracheophyta</taxon>
        <taxon>Spermatophyta</taxon>
        <taxon>Magnoliopsida</taxon>
        <taxon>eudicotyledons</taxon>
        <taxon>Gunneridae</taxon>
        <taxon>Pentapetalae</taxon>
        <taxon>rosids</taxon>
        <taxon>malvids</taxon>
        <taxon>Malvales</taxon>
        <taxon>Malvaceae</taxon>
        <taxon>Malvoideae</taxon>
        <taxon>Gossypium</taxon>
    </lineage>
</organism>
<comment type="function">
    <text evidence="2">Photosystem II (PSII) is a light-driven water:plastoquinone oxidoreductase that uses light energy to abstract electrons from H(2)O, generating O(2) and a proton gradient subsequently used for ATP formation. It consists of a core antenna complex that captures photons, and an electron transfer chain that converts photonic excitation into a charge separation. The D1/D2 (PsbA/PsbD) reaction center heterodimer binds P680, the primary electron donor of PSII as well as several subsequent electron acceptors. D2 is needed for assembly of a stable PSII complex.</text>
</comment>
<comment type="catalytic activity">
    <reaction evidence="2">
        <text>2 a plastoquinone + 4 hnu + 2 H2O = 2 a plastoquinol + O2</text>
        <dbReference type="Rhea" id="RHEA:36359"/>
        <dbReference type="Rhea" id="RHEA-COMP:9561"/>
        <dbReference type="Rhea" id="RHEA-COMP:9562"/>
        <dbReference type="ChEBI" id="CHEBI:15377"/>
        <dbReference type="ChEBI" id="CHEBI:15379"/>
        <dbReference type="ChEBI" id="CHEBI:17757"/>
        <dbReference type="ChEBI" id="CHEBI:30212"/>
        <dbReference type="ChEBI" id="CHEBI:62192"/>
        <dbReference type="EC" id="1.10.3.9"/>
    </reaction>
</comment>
<comment type="cofactor">
    <text evidence="2">The D1/D2 heterodimer binds P680, chlorophylls that are the primary electron donor of PSII, and subsequent electron acceptors. It shares a non-heme iron and each subunit binds pheophytin, quinone, additional chlorophylls, carotenoids and lipids. There is also a Cl(-1) ion associated with D1 and D2, which is required for oxygen evolution. The PSII complex binds additional chlorophylls, carotenoids and specific lipids.</text>
</comment>
<comment type="subunit">
    <text evidence="2">PSII is composed of 1 copy each of membrane proteins PsbA, PsbB, PsbC, PsbD, PsbE, PsbF, PsbH, PsbI, PsbJ, PsbK, PsbL, PsbM, PsbT, PsbX, PsbY, PsbZ, Psb30/Ycf12, at least 3 peripheral proteins of the oxygen-evolving complex and a large number of cofactors. It forms dimeric complexes.</text>
</comment>
<comment type="subcellular location">
    <subcellularLocation>
        <location evidence="2">Plastid</location>
        <location evidence="2">Chloroplast thylakoid membrane</location>
        <topology evidence="2">Multi-pass membrane protein</topology>
    </subcellularLocation>
</comment>
<comment type="miscellaneous">
    <text evidence="2">2 of the reaction center chlorophylls (ChlD1 and ChlD2) are entirely coordinated by water.</text>
</comment>
<comment type="similarity">
    <text evidence="2">Belongs to the reaction center PufL/M/PsbA/D family.</text>
</comment>
<keyword id="KW-0007">Acetylation</keyword>
<keyword id="KW-0148">Chlorophyll</keyword>
<keyword id="KW-0150">Chloroplast</keyword>
<keyword id="KW-0157">Chromophore</keyword>
<keyword id="KW-0249">Electron transport</keyword>
<keyword id="KW-0408">Iron</keyword>
<keyword id="KW-0460">Magnesium</keyword>
<keyword id="KW-0472">Membrane</keyword>
<keyword id="KW-0479">Metal-binding</keyword>
<keyword id="KW-0560">Oxidoreductase</keyword>
<keyword id="KW-0597">Phosphoprotein</keyword>
<keyword id="KW-0602">Photosynthesis</keyword>
<keyword id="KW-0604">Photosystem II</keyword>
<keyword id="KW-0934">Plastid</keyword>
<keyword id="KW-1185">Reference proteome</keyword>
<keyword id="KW-0793">Thylakoid</keyword>
<keyword id="KW-0812">Transmembrane</keyword>
<keyword id="KW-1133">Transmembrane helix</keyword>
<keyword id="KW-0813">Transport</keyword>
<protein>
    <recommendedName>
        <fullName evidence="2">Photosystem II D2 protein</fullName>
        <shortName evidence="2">PSII D2 protein</shortName>
        <ecNumber evidence="2">1.10.3.9</ecNumber>
    </recommendedName>
    <alternativeName>
        <fullName evidence="2">Photosystem Q(A) protein</fullName>
    </alternativeName>
</protein>
<dbReference type="EC" id="1.10.3.9" evidence="2"/>
<dbReference type="EMBL" id="DQ345959">
    <property type="protein sequence ID" value="ABC73623.1"/>
    <property type="molecule type" value="Genomic_DNA"/>
</dbReference>
<dbReference type="RefSeq" id="YP_538930.1">
    <property type="nucleotide sequence ID" value="NC_007944.1"/>
</dbReference>
<dbReference type="SMR" id="Q2L902"/>
<dbReference type="GeneID" id="3989205"/>
<dbReference type="KEGG" id="ghi:3989205"/>
<dbReference type="OrthoDB" id="64780at41938"/>
<dbReference type="Proteomes" id="UP000189702">
    <property type="component" value="Chloroplast Pltd"/>
</dbReference>
<dbReference type="GO" id="GO:0009535">
    <property type="term" value="C:chloroplast thylakoid membrane"/>
    <property type="evidence" value="ECO:0007669"/>
    <property type="project" value="UniProtKB-SubCell"/>
</dbReference>
<dbReference type="GO" id="GO:0009523">
    <property type="term" value="C:photosystem II"/>
    <property type="evidence" value="ECO:0000318"/>
    <property type="project" value="GO_Central"/>
</dbReference>
<dbReference type="GO" id="GO:0016168">
    <property type="term" value="F:chlorophyll binding"/>
    <property type="evidence" value="ECO:0007669"/>
    <property type="project" value="UniProtKB-UniRule"/>
</dbReference>
<dbReference type="GO" id="GO:0045156">
    <property type="term" value="F:electron transporter, transferring electrons within the cyclic electron transport pathway of photosynthesis activity"/>
    <property type="evidence" value="ECO:0007669"/>
    <property type="project" value="InterPro"/>
</dbReference>
<dbReference type="GO" id="GO:0005506">
    <property type="term" value="F:iron ion binding"/>
    <property type="evidence" value="ECO:0007669"/>
    <property type="project" value="UniProtKB-UniRule"/>
</dbReference>
<dbReference type="GO" id="GO:0010242">
    <property type="term" value="F:oxygen evolving activity"/>
    <property type="evidence" value="ECO:0007669"/>
    <property type="project" value="UniProtKB-EC"/>
</dbReference>
<dbReference type="GO" id="GO:0009772">
    <property type="term" value="P:photosynthetic electron transport in photosystem II"/>
    <property type="evidence" value="ECO:0007669"/>
    <property type="project" value="InterPro"/>
</dbReference>
<dbReference type="CDD" id="cd09288">
    <property type="entry name" value="Photosystem-II_D2"/>
    <property type="match status" value="1"/>
</dbReference>
<dbReference type="FunFam" id="1.20.85.10:FF:000001">
    <property type="entry name" value="photosystem II D2 protein-like"/>
    <property type="match status" value="1"/>
</dbReference>
<dbReference type="Gene3D" id="1.20.85.10">
    <property type="entry name" value="Photosystem II protein D1-like"/>
    <property type="match status" value="1"/>
</dbReference>
<dbReference type="HAMAP" id="MF_01383">
    <property type="entry name" value="PSII_PsbD_D2"/>
    <property type="match status" value="1"/>
</dbReference>
<dbReference type="InterPro" id="IPR055266">
    <property type="entry name" value="D1/D2"/>
</dbReference>
<dbReference type="InterPro" id="IPR036854">
    <property type="entry name" value="Photo_II_D1/D2_sf"/>
</dbReference>
<dbReference type="InterPro" id="IPR000484">
    <property type="entry name" value="Photo_RC_L/M"/>
</dbReference>
<dbReference type="InterPro" id="IPR055265">
    <property type="entry name" value="Photo_RC_L/M_CS"/>
</dbReference>
<dbReference type="InterPro" id="IPR005868">
    <property type="entry name" value="PSII_PsbD/D2"/>
</dbReference>
<dbReference type="NCBIfam" id="TIGR01152">
    <property type="entry name" value="psbD"/>
    <property type="match status" value="1"/>
</dbReference>
<dbReference type="PANTHER" id="PTHR33149:SF12">
    <property type="entry name" value="PHOTOSYSTEM II D2 PROTEIN"/>
    <property type="match status" value="1"/>
</dbReference>
<dbReference type="PANTHER" id="PTHR33149">
    <property type="entry name" value="PHOTOSYSTEM II PROTEIN D1"/>
    <property type="match status" value="1"/>
</dbReference>
<dbReference type="Pfam" id="PF00124">
    <property type="entry name" value="Photo_RC"/>
    <property type="match status" value="1"/>
</dbReference>
<dbReference type="PRINTS" id="PR00256">
    <property type="entry name" value="REACTNCENTRE"/>
</dbReference>
<dbReference type="SUPFAM" id="SSF81483">
    <property type="entry name" value="Bacterial photosystem II reaction centre, L and M subunits"/>
    <property type="match status" value="1"/>
</dbReference>
<dbReference type="PROSITE" id="PS00244">
    <property type="entry name" value="REACTION_CENTER"/>
    <property type="match status" value="1"/>
</dbReference>
<accession>Q2L902</accession>